<accession>Q0IE55</accession>
<evidence type="ECO:0000255" key="1">
    <source>
        <dbReference type="HAMAP-Rule" id="MF_00046"/>
    </source>
</evidence>
<keyword id="KW-0067">ATP-binding</keyword>
<keyword id="KW-0131">Cell cycle</keyword>
<keyword id="KW-0132">Cell division</keyword>
<keyword id="KW-0133">Cell shape</keyword>
<keyword id="KW-0961">Cell wall biogenesis/degradation</keyword>
<keyword id="KW-0963">Cytoplasm</keyword>
<keyword id="KW-0436">Ligase</keyword>
<keyword id="KW-0547">Nucleotide-binding</keyword>
<keyword id="KW-0573">Peptidoglycan synthesis</keyword>
<keyword id="KW-1185">Reference proteome</keyword>
<feature type="chain" id="PRO_1000004431" description="UDP-N-acetylmuramate--L-alanine ligase">
    <location>
        <begin position="1"/>
        <end position="483"/>
    </location>
</feature>
<feature type="binding site" evidence="1">
    <location>
        <begin position="122"/>
        <end position="128"/>
    </location>
    <ligand>
        <name>ATP</name>
        <dbReference type="ChEBI" id="CHEBI:30616"/>
    </ligand>
</feature>
<dbReference type="EC" id="6.3.2.8" evidence="1"/>
<dbReference type="EMBL" id="CP000435">
    <property type="protein sequence ID" value="ABI46504.1"/>
    <property type="molecule type" value="Genomic_DNA"/>
</dbReference>
<dbReference type="RefSeq" id="WP_011618019.1">
    <property type="nucleotide sequence ID" value="NC_008319.1"/>
</dbReference>
<dbReference type="SMR" id="Q0IE55"/>
<dbReference type="STRING" id="64471.sync_0028"/>
<dbReference type="KEGG" id="syg:sync_0028"/>
<dbReference type="eggNOG" id="COG0773">
    <property type="taxonomic scope" value="Bacteria"/>
</dbReference>
<dbReference type="HOGENOM" id="CLU_028104_2_2_3"/>
<dbReference type="OrthoDB" id="9804126at2"/>
<dbReference type="UniPathway" id="UPA00219"/>
<dbReference type="Proteomes" id="UP000001961">
    <property type="component" value="Chromosome"/>
</dbReference>
<dbReference type="GO" id="GO:0005737">
    <property type="term" value="C:cytoplasm"/>
    <property type="evidence" value="ECO:0007669"/>
    <property type="project" value="UniProtKB-SubCell"/>
</dbReference>
<dbReference type="GO" id="GO:0005524">
    <property type="term" value="F:ATP binding"/>
    <property type="evidence" value="ECO:0007669"/>
    <property type="project" value="UniProtKB-UniRule"/>
</dbReference>
<dbReference type="GO" id="GO:0008763">
    <property type="term" value="F:UDP-N-acetylmuramate-L-alanine ligase activity"/>
    <property type="evidence" value="ECO:0007669"/>
    <property type="project" value="UniProtKB-UniRule"/>
</dbReference>
<dbReference type="GO" id="GO:0051301">
    <property type="term" value="P:cell division"/>
    <property type="evidence" value="ECO:0007669"/>
    <property type="project" value="UniProtKB-KW"/>
</dbReference>
<dbReference type="GO" id="GO:0071555">
    <property type="term" value="P:cell wall organization"/>
    <property type="evidence" value="ECO:0007669"/>
    <property type="project" value="UniProtKB-KW"/>
</dbReference>
<dbReference type="GO" id="GO:0009252">
    <property type="term" value="P:peptidoglycan biosynthetic process"/>
    <property type="evidence" value="ECO:0007669"/>
    <property type="project" value="UniProtKB-UniRule"/>
</dbReference>
<dbReference type="GO" id="GO:0008360">
    <property type="term" value="P:regulation of cell shape"/>
    <property type="evidence" value="ECO:0007669"/>
    <property type="project" value="UniProtKB-KW"/>
</dbReference>
<dbReference type="Gene3D" id="3.90.190.20">
    <property type="entry name" value="Mur ligase, C-terminal domain"/>
    <property type="match status" value="1"/>
</dbReference>
<dbReference type="Gene3D" id="3.40.1190.10">
    <property type="entry name" value="Mur-like, catalytic domain"/>
    <property type="match status" value="1"/>
</dbReference>
<dbReference type="Gene3D" id="3.40.50.720">
    <property type="entry name" value="NAD(P)-binding Rossmann-like Domain"/>
    <property type="match status" value="1"/>
</dbReference>
<dbReference type="HAMAP" id="MF_00046">
    <property type="entry name" value="MurC"/>
    <property type="match status" value="1"/>
</dbReference>
<dbReference type="InterPro" id="IPR036565">
    <property type="entry name" value="Mur-like_cat_sf"/>
</dbReference>
<dbReference type="InterPro" id="IPR004101">
    <property type="entry name" value="Mur_ligase_C"/>
</dbReference>
<dbReference type="InterPro" id="IPR036615">
    <property type="entry name" value="Mur_ligase_C_dom_sf"/>
</dbReference>
<dbReference type="InterPro" id="IPR013221">
    <property type="entry name" value="Mur_ligase_cen"/>
</dbReference>
<dbReference type="InterPro" id="IPR000713">
    <property type="entry name" value="Mur_ligase_N"/>
</dbReference>
<dbReference type="InterPro" id="IPR050061">
    <property type="entry name" value="MurCDEF_pg_biosynth"/>
</dbReference>
<dbReference type="InterPro" id="IPR005758">
    <property type="entry name" value="UDP-N-AcMur_Ala_ligase_MurC"/>
</dbReference>
<dbReference type="NCBIfam" id="TIGR01082">
    <property type="entry name" value="murC"/>
    <property type="match status" value="1"/>
</dbReference>
<dbReference type="PANTHER" id="PTHR43445:SF3">
    <property type="entry name" value="UDP-N-ACETYLMURAMATE--L-ALANINE LIGASE"/>
    <property type="match status" value="1"/>
</dbReference>
<dbReference type="PANTHER" id="PTHR43445">
    <property type="entry name" value="UDP-N-ACETYLMURAMATE--L-ALANINE LIGASE-RELATED"/>
    <property type="match status" value="1"/>
</dbReference>
<dbReference type="Pfam" id="PF01225">
    <property type="entry name" value="Mur_ligase"/>
    <property type="match status" value="1"/>
</dbReference>
<dbReference type="Pfam" id="PF02875">
    <property type="entry name" value="Mur_ligase_C"/>
    <property type="match status" value="1"/>
</dbReference>
<dbReference type="Pfam" id="PF08245">
    <property type="entry name" value="Mur_ligase_M"/>
    <property type="match status" value="1"/>
</dbReference>
<dbReference type="SUPFAM" id="SSF51984">
    <property type="entry name" value="MurCD N-terminal domain"/>
    <property type="match status" value="1"/>
</dbReference>
<dbReference type="SUPFAM" id="SSF53623">
    <property type="entry name" value="MurD-like peptide ligases, catalytic domain"/>
    <property type="match status" value="1"/>
</dbReference>
<dbReference type="SUPFAM" id="SSF53244">
    <property type="entry name" value="MurD-like peptide ligases, peptide-binding domain"/>
    <property type="match status" value="1"/>
</dbReference>
<organism>
    <name type="scientific">Synechococcus sp. (strain CC9311)</name>
    <dbReference type="NCBI Taxonomy" id="64471"/>
    <lineage>
        <taxon>Bacteria</taxon>
        <taxon>Bacillati</taxon>
        <taxon>Cyanobacteriota</taxon>
        <taxon>Cyanophyceae</taxon>
        <taxon>Synechococcales</taxon>
        <taxon>Synechococcaceae</taxon>
        <taxon>Synechococcus</taxon>
    </lineage>
</organism>
<gene>
    <name evidence="1" type="primary">murC</name>
    <name type="ordered locus">sync_0028</name>
</gene>
<reference key="1">
    <citation type="journal article" date="2006" name="Proc. Natl. Acad. Sci. U.S.A.">
        <title>Genome sequence of Synechococcus CC9311: insights into adaptation to a coastal environment.</title>
        <authorList>
            <person name="Palenik B."/>
            <person name="Ren Q."/>
            <person name="Dupont C.L."/>
            <person name="Myers G.S."/>
            <person name="Heidelberg J.F."/>
            <person name="Badger J.H."/>
            <person name="Madupu R."/>
            <person name="Nelson W.C."/>
            <person name="Brinkac L.M."/>
            <person name="Dodson R.J."/>
            <person name="Durkin A.S."/>
            <person name="Daugherty S.C."/>
            <person name="Sullivan S.A."/>
            <person name="Khouri H."/>
            <person name="Mohamoud Y."/>
            <person name="Halpin R."/>
            <person name="Paulsen I.T."/>
        </authorList>
    </citation>
    <scope>NUCLEOTIDE SEQUENCE [LARGE SCALE GENOMIC DNA]</scope>
    <source>
        <strain>CC9311</strain>
    </source>
</reference>
<sequence>MADSIQPEKHIHFIGMGGIGMSALALILAERGHSVSGSDRKLTPAMQALETKALAIFESQVSKNFAHLQSRGIEEPLVVVSTAIPSTNPELIEAQRLDLTIWHRSDLLAWLIEQQPSIAVAGSHGKTTTSTVLTTLLATVGEDPTAVIGGVVPCYGSNGHKGNGRLLVAEADESDGSLVKFKASLGIITNLELDHTDHYRNLDDLIETMKTFGRGCKRLLINHDDPILKEHFQADACWSVHHVETADYAALPVQLDGDRTIADYFEQGQKVGQITLPLPGLHNLSNVVAALAACRMEGVPLEALLLAVTELRSPGRRFDFRGEWQDRQVVDDYAHHPSEVQATLTMAQLMVQSGRSPLPRTPQRLLAVFQPHRYSRTQEFLNAFAQALVSADALVLAPIYGAGEQPIEGINSELLARSIRLIDPNQPVFVASTMEELAGLVKQHSQPDDLILAMGAGDVNSLWERLSQEGIGGEASCSPAIAA</sequence>
<proteinExistence type="inferred from homology"/>
<protein>
    <recommendedName>
        <fullName evidence="1">UDP-N-acetylmuramate--L-alanine ligase</fullName>
        <ecNumber evidence="1">6.3.2.8</ecNumber>
    </recommendedName>
    <alternativeName>
        <fullName evidence="1">UDP-N-acetylmuramoyl-L-alanine synthetase</fullName>
    </alternativeName>
</protein>
<name>MURC_SYNS3</name>
<comment type="function">
    <text evidence="1">Cell wall formation.</text>
</comment>
<comment type="catalytic activity">
    <reaction evidence="1">
        <text>UDP-N-acetyl-alpha-D-muramate + L-alanine + ATP = UDP-N-acetyl-alpha-D-muramoyl-L-alanine + ADP + phosphate + H(+)</text>
        <dbReference type="Rhea" id="RHEA:23372"/>
        <dbReference type="ChEBI" id="CHEBI:15378"/>
        <dbReference type="ChEBI" id="CHEBI:30616"/>
        <dbReference type="ChEBI" id="CHEBI:43474"/>
        <dbReference type="ChEBI" id="CHEBI:57972"/>
        <dbReference type="ChEBI" id="CHEBI:70757"/>
        <dbReference type="ChEBI" id="CHEBI:83898"/>
        <dbReference type="ChEBI" id="CHEBI:456216"/>
        <dbReference type="EC" id="6.3.2.8"/>
    </reaction>
</comment>
<comment type="pathway">
    <text evidence="1">Cell wall biogenesis; peptidoglycan biosynthesis.</text>
</comment>
<comment type="subcellular location">
    <subcellularLocation>
        <location evidence="1">Cytoplasm</location>
    </subcellularLocation>
</comment>
<comment type="similarity">
    <text evidence="1">Belongs to the MurCDEF family.</text>
</comment>